<protein>
    <recommendedName>
        <fullName evidence="1">Tyrosine--tRNA ligase</fullName>
        <ecNumber evidence="1">6.1.1.1</ecNumber>
    </recommendedName>
    <alternativeName>
        <fullName evidence="1">Tyrosyl-tRNA synthetase</fullName>
        <shortName evidence="1">TyrRS</shortName>
    </alternativeName>
</protein>
<dbReference type="EC" id="6.1.1.1" evidence="1"/>
<dbReference type="EMBL" id="CP000013">
    <property type="protein sequence ID" value="AAU07222.1"/>
    <property type="molecule type" value="Genomic_DNA"/>
</dbReference>
<dbReference type="RefSeq" id="WP_011193696.1">
    <property type="nucleotide sequence ID" value="NZ_CP028872.1"/>
</dbReference>
<dbReference type="SMR" id="Q661P9"/>
<dbReference type="GeneID" id="45161157"/>
<dbReference type="KEGG" id="bga:BG0369"/>
<dbReference type="eggNOG" id="COG0162">
    <property type="taxonomic scope" value="Bacteria"/>
</dbReference>
<dbReference type="HOGENOM" id="CLU_024003_0_3_12"/>
<dbReference type="OrthoDB" id="9804243at2"/>
<dbReference type="Proteomes" id="UP000002276">
    <property type="component" value="Chromosome"/>
</dbReference>
<dbReference type="GO" id="GO:0005829">
    <property type="term" value="C:cytosol"/>
    <property type="evidence" value="ECO:0007669"/>
    <property type="project" value="TreeGrafter"/>
</dbReference>
<dbReference type="GO" id="GO:0005524">
    <property type="term" value="F:ATP binding"/>
    <property type="evidence" value="ECO:0007669"/>
    <property type="project" value="UniProtKB-UniRule"/>
</dbReference>
<dbReference type="GO" id="GO:0003723">
    <property type="term" value="F:RNA binding"/>
    <property type="evidence" value="ECO:0007669"/>
    <property type="project" value="UniProtKB-KW"/>
</dbReference>
<dbReference type="GO" id="GO:0004831">
    <property type="term" value="F:tyrosine-tRNA ligase activity"/>
    <property type="evidence" value="ECO:0007669"/>
    <property type="project" value="UniProtKB-UniRule"/>
</dbReference>
<dbReference type="GO" id="GO:0006437">
    <property type="term" value="P:tyrosyl-tRNA aminoacylation"/>
    <property type="evidence" value="ECO:0007669"/>
    <property type="project" value="UniProtKB-UniRule"/>
</dbReference>
<dbReference type="CDD" id="cd00165">
    <property type="entry name" value="S4"/>
    <property type="match status" value="1"/>
</dbReference>
<dbReference type="CDD" id="cd00805">
    <property type="entry name" value="TyrRS_core"/>
    <property type="match status" value="1"/>
</dbReference>
<dbReference type="FunFam" id="1.10.240.10:FF:000001">
    <property type="entry name" value="Tyrosine--tRNA ligase"/>
    <property type="match status" value="1"/>
</dbReference>
<dbReference type="Gene3D" id="3.40.50.620">
    <property type="entry name" value="HUPs"/>
    <property type="match status" value="1"/>
</dbReference>
<dbReference type="Gene3D" id="3.10.290.10">
    <property type="entry name" value="RNA-binding S4 domain"/>
    <property type="match status" value="1"/>
</dbReference>
<dbReference type="Gene3D" id="1.10.240.10">
    <property type="entry name" value="Tyrosyl-Transfer RNA Synthetase"/>
    <property type="match status" value="1"/>
</dbReference>
<dbReference type="HAMAP" id="MF_02006">
    <property type="entry name" value="Tyr_tRNA_synth_type1"/>
    <property type="match status" value="1"/>
</dbReference>
<dbReference type="InterPro" id="IPR002305">
    <property type="entry name" value="aa-tRNA-synth_Ic"/>
</dbReference>
<dbReference type="InterPro" id="IPR014729">
    <property type="entry name" value="Rossmann-like_a/b/a_fold"/>
</dbReference>
<dbReference type="InterPro" id="IPR002942">
    <property type="entry name" value="S4_RNA-bd"/>
</dbReference>
<dbReference type="InterPro" id="IPR036986">
    <property type="entry name" value="S4_RNA-bd_sf"/>
</dbReference>
<dbReference type="InterPro" id="IPR054608">
    <property type="entry name" value="SYY-like_C"/>
</dbReference>
<dbReference type="InterPro" id="IPR002307">
    <property type="entry name" value="Tyr-tRNA-ligase"/>
</dbReference>
<dbReference type="InterPro" id="IPR024088">
    <property type="entry name" value="Tyr-tRNA-ligase_bac-type"/>
</dbReference>
<dbReference type="InterPro" id="IPR024107">
    <property type="entry name" value="Tyr-tRNA-ligase_bac_1"/>
</dbReference>
<dbReference type="NCBIfam" id="TIGR00234">
    <property type="entry name" value="tyrS"/>
    <property type="match status" value="1"/>
</dbReference>
<dbReference type="PANTHER" id="PTHR11766:SF0">
    <property type="entry name" value="TYROSINE--TRNA LIGASE, MITOCHONDRIAL"/>
    <property type="match status" value="1"/>
</dbReference>
<dbReference type="PANTHER" id="PTHR11766">
    <property type="entry name" value="TYROSYL-TRNA SYNTHETASE"/>
    <property type="match status" value="1"/>
</dbReference>
<dbReference type="Pfam" id="PF22421">
    <property type="entry name" value="SYY_C-terminal"/>
    <property type="match status" value="1"/>
</dbReference>
<dbReference type="Pfam" id="PF00579">
    <property type="entry name" value="tRNA-synt_1b"/>
    <property type="match status" value="1"/>
</dbReference>
<dbReference type="PRINTS" id="PR01040">
    <property type="entry name" value="TRNASYNTHTYR"/>
</dbReference>
<dbReference type="SMART" id="SM00363">
    <property type="entry name" value="S4"/>
    <property type="match status" value="1"/>
</dbReference>
<dbReference type="SUPFAM" id="SSF55174">
    <property type="entry name" value="Alpha-L RNA-binding motif"/>
    <property type="match status" value="1"/>
</dbReference>
<dbReference type="SUPFAM" id="SSF52374">
    <property type="entry name" value="Nucleotidylyl transferase"/>
    <property type="match status" value="1"/>
</dbReference>
<dbReference type="PROSITE" id="PS50889">
    <property type="entry name" value="S4"/>
    <property type="match status" value="1"/>
</dbReference>
<gene>
    <name evidence="1" type="primary">tyrS</name>
    <name type="ordered locus">BG0369</name>
</gene>
<reference key="1">
    <citation type="journal article" date="2004" name="Nucleic Acids Res.">
        <title>Comparative analysis of the Borrelia garinii genome.</title>
        <authorList>
            <person name="Gloeckner G."/>
            <person name="Lehmann R."/>
            <person name="Romualdi A."/>
            <person name="Pradella S."/>
            <person name="Schulte-Spechtel U."/>
            <person name="Schilhabel M."/>
            <person name="Wilske B."/>
            <person name="Suehnel J."/>
            <person name="Platzer M."/>
        </authorList>
    </citation>
    <scope>NUCLEOTIDE SEQUENCE [LARGE SCALE GENOMIC DNA]</scope>
    <source>
        <strain>ATCC BAA-2496 / DSM 23469 / PBi</strain>
    </source>
</reference>
<organism>
    <name type="scientific">Borrelia garinii subsp. bavariensis (strain ATCC BAA-2496 / DSM 23469 / PBi)</name>
    <name type="common">Borreliella bavariensis</name>
    <dbReference type="NCBI Taxonomy" id="290434"/>
    <lineage>
        <taxon>Bacteria</taxon>
        <taxon>Pseudomonadati</taxon>
        <taxon>Spirochaetota</taxon>
        <taxon>Spirochaetia</taxon>
        <taxon>Spirochaetales</taxon>
        <taxon>Borreliaceae</taxon>
        <taxon>Borreliella</taxon>
    </lineage>
</organism>
<sequence length="405" mass="46446">MNLALNLLYKRGFLKQCTSLKVLSDLMDREKIVFYAGVDTTSSSLHIGHLIPFLAMMHLRQHGHMPIVLIGDSTTKIGDPSGKSEMRKILSSEVINNNALSIKNQLQKITRFSSSCFIHNSNWLDNLNYIEFLRDIGIHFSVNRMLSFETYKRRLDFGLSFIEFNYQLLQSYDYYMLNKIKNCKLQIGGDDQWGNIVSGVDLIRRKMGVEAFGLTFPLITRSDGKKMGKSEKGAVYLDSSLYSIYDFYQYFRNTSDSDVKTFLYLFTFLEEDEIESISNFKGNSLNKAKEILAFEITKIVHGEVEALKVQEASFAAFRGSGDRSNIPFFKFSFSGLEEEILLIDLMLDSKIVPSKSEGRRLINSGGVYINGKRVENQNHCITREDFNNNEIELRVGKKKFLRIVL</sequence>
<comment type="function">
    <text evidence="1">Catalyzes the attachment of tyrosine to tRNA(Tyr) in a two-step reaction: tyrosine is first activated by ATP to form Tyr-AMP and then transferred to the acceptor end of tRNA(Tyr).</text>
</comment>
<comment type="catalytic activity">
    <reaction evidence="1">
        <text>tRNA(Tyr) + L-tyrosine + ATP = L-tyrosyl-tRNA(Tyr) + AMP + diphosphate + H(+)</text>
        <dbReference type="Rhea" id="RHEA:10220"/>
        <dbReference type="Rhea" id="RHEA-COMP:9706"/>
        <dbReference type="Rhea" id="RHEA-COMP:9707"/>
        <dbReference type="ChEBI" id="CHEBI:15378"/>
        <dbReference type="ChEBI" id="CHEBI:30616"/>
        <dbReference type="ChEBI" id="CHEBI:33019"/>
        <dbReference type="ChEBI" id="CHEBI:58315"/>
        <dbReference type="ChEBI" id="CHEBI:78442"/>
        <dbReference type="ChEBI" id="CHEBI:78536"/>
        <dbReference type="ChEBI" id="CHEBI:456215"/>
        <dbReference type="EC" id="6.1.1.1"/>
    </reaction>
</comment>
<comment type="subunit">
    <text evidence="1">Homodimer.</text>
</comment>
<comment type="subcellular location">
    <subcellularLocation>
        <location evidence="1">Cytoplasm</location>
    </subcellularLocation>
</comment>
<comment type="similarity">
    <text evidence="1">Belongs to the class-I aminoacyl-tRNA synthetase family. TyrS type 1 subfamily.</text>
</comment>
<keyword id="KW-0030">Aminoacyl-tRNA synthetase</keyword>
<keyword id="KW-0067">ATP-binding</keyword>
<keyword id="KW-0963">Cytoplasm</keyword>
<keyword id="KW-0436">Ligase</keyword>
<keyword id="KW-0547">Nucleotide-binding</keyword>
<keyword id="KW-0648">Protein biosynthesis</keyword>
<keyword id="KW-0694">RNA-binding</keyword>
<proteinExistence type="inferred from homology"/>
<name>SYY_BORGP</name>
<feature type="chain" id="PRO_0000234686" description="Tyrosine--tRNA ligase">
    <location>
        <begin position="1"/>
        <end position="405"/>
    </location>
</feature>
<feature type="domain" description="S4 RNA-binding" evidence="1">
    <location>
        <begin position="340"/>
        <end position="404"/>
    </location>
</feature>
<feature type="short sequence motif" description="'HIGH' region">
    <location>
        <begin position="40"/>
        <end position="49"/>
    </location>
</feature>
<feature type="short sequence motif" description="'KMSKS' region">
    <location>
        <begin position="226"/>
        <end position="230"/>
    </location>
</feature>
<feature type="binding site" evidence="1">
    <location>
        <position position="35"/>
    </location>
    <ligand>
        <name>L-tyrosine</name>
        <dbReference type="ChEBI" id="CHEBI:58315"/>
    </ligand>
</feature>
<feature type="binding site" evidence="1">
    <location>
        <position position="166"/>
    </location>
    <ligand>
        <name>L-tyrosine</name>
        <dbReference type="ChEBI" id="CHEBI:58315"/>
    </ligand>
</feature>
<feature type="binding site" evidence="1">
    <location>
        <position position="170"/>
    </location>
    <ligand>
        <name>L-tyrosine</name>
        <dbReference type="ChEBI" id="CHEBI:58315"/>
    </ligand>
</feature>
<feature type="binding site" evidence="1">
    <location>
        <position position="229"/>
    </location>
    <ligand>
        <name>ATP</name>
        <dbReference type="ChEBI" id="CHEBI:30616"/>
    </ligand>
</feature>
<accession>Q661P9</accession>
<evidence type="ECO:0000255" key="1">
    <source>
        <dbReference type="HAMAP-Rule" id="MF_02006"/>
    </source>
</evidence>